<dbReference type="EC" id="3.4.24.58"/>
<dbReference type="GO" id="GO:0005576">
    <property type="term" value="C:extracellular region"/>
    <property type="evidence" value="ECO:0007669"/>
    <property type="project" value="UniProtKB-SubCell"/>
</dbReference>
<dbReference type="GO" id="GO:0046872">
    <property type="term" value="F:metal ion binding"/>
    <property type="evidence" value="ECO:0007669"/>
    <property type="project" value="UniProtKB-KW"/>
</dbReference>
<dbReference type="GO" id="GO:0008237">
    <property type="term" value="F:metallopeptidase activity"/>
    <property type="evidence" value="ECO:0007669"/>
    <property type="project" value="UniProtKB-KW"/>
</dbReference>
<dbReference type="GO" id="GO:0090729">
    <property type="term" value="F:toxin activity"/>
    <property type="evidence" value="ECO:0007669"/>
    <property type="project" value="UniProtKB-KW"/>
</dbReference>
<dbReference type="GO" id="GO:0006508">
    <property type="term" value="P:proteolysis"/>
    <property type="evidence" value="ECO:0007669"/>
    <property type="project" value="UniProtKB-KW"/>
</dbReference>
<comment type="function">
    <text evidence="1">Catalytic subunit of coagulation factor X-activating enzyme, a zinc-protease enzyme that acts in hemostasis. Activates coagulation factor X (F10) by cleaving the Arg-Ile bond at position 234 and is also able to activate coagulation factor IX (F9) and protein C (PROC) by specific cleavage of Arg-Ile and Arg-Val bonds (By similarity).</text>
</comment>
<comment type="catalytic activity">
    <reaction evidence="3">
        <text>Specifically activates several components of the blood clotting system, including coagulation factor X, coagulation factor IX and protein C by cleavage of Arg-|-Xaa bonds. Has no action on insulin B chain.</text>
        <dbReference type="EC" id="3.4.24.58"/>
    </reaction>
</comment>
<comment type="cofactor">
    <cofactor evidence="2">
        <name>Zn(2+)</name>
        <dbReference type="ChEBI" id="CHEBI:29105"/>
    </cofactor>
    <text evidence="2">Binds 1 zinc ion per subunit.</text>
</comment>
<comment type="subunit">
    <text evidence="1">Heterotrimer; disulfide-linked. The heterotrimer consists of 1 heavy chain and 2 light chains (lectins): LC1 and LC2 (By similarity).</text>
</comment>
<comment type="subcellular location">
    <subcellularLocation>
        <location evidence="5">Secreted</location>
    </subcellularLocation>
</comment>
<comment type="tissue specificity">
    <text evidence="5">Expressed by the venom gland.</text>
</comment>
<comment type="PTM">
    <text evidence="3">N-glycosylated.</text>
</comment>
<comment type="similarity">
    <text evidence="7">Belongs to the venom metalloproteinase (M12B) family. P-III subfamily. P-IIId sub-subfamily.</text>
</comment>
<name>VM3CX_DABRR</name>
<protein>
    <recommendedName>
        <fullName evidence="3 6">Coagulation factor X-activating enzyme heavy chain</fullName>
        <ecNumber>3.4.24.58</ecNumber>
    </recommendedName>
    <alternativeName>
        <fullName evidence="3 6">Coagulation factor X-activating enzyme chain alpha</fullName>
    </alternativeName>
    <alternativeName>
        <fullName evidence="3 6">RVV-X heavy chain</fullName>
    </alternativeName>
    <alternativeName>
        <fullName>Snake venom metalloproteinase</fullName>
        <shortName>SVMP</shortName>
    </alternativeName>
</protein>
<accession>P86536</accession>
<sequence length="19" mass="2152">VATSEQFNKTFIELVIVVD</sequence>
<feature type="chain" id="PRO_0000394729" description="Coagulation factor X-activating enzyme heavy chain">
    <location>
        <begin position="1"/>
        <end position="19" status="greater than"/>
    </location>
</feature>
<feature type="domain" description="Peptidase M12B" evidence="4">
    <location>
        <begin position="10"/>
        <end position="19" status="greater than"/>
    </location>
</feature>
<feature type="non-terminal residue" evidence="6">
    <location>
        <position position="19"/>
    </location>
</feature>
<organism>
    <name type="scientific">Daboia russelii</name>
    <name type="common">Russel's viper</name>
    <name type="synonym">Vipera russelii</name>
    <dbReference type="NCBI Taxonomy" id="8707"/>
    <lineage>
        <taxon>Eukaryota</taxon>
        <taxon>Metazoa</taxon>
        <taxon>Chordata</taxon>
        <taxon>Craniata</taxon>
        <taxon>Vertebrata</taxon>
        <taxon>Euteleostomi</taxon>
        <taxon>Lepidosauria</taxon>
        <taxon>Squamata</taxon>
        <taxon>Bifurcata</taxon>
        <taxon>Unidentata</taxon>
        <taxon>Episquamata</taxon>
        <taxon>Toxicofera</taxon>
        <taxon>Serpentes</taxon>
        <taxon>Colubroidea</taxon>
        <taxon>Viperidae</taxon>
        <taxon>Viperinae</taxon>
        <taxon>Daboia</taxon>
    </lineage>
</organism>
<reference evidence="7" key="1">
    <citation type="journal article" date="2010" name="Biomed. Res.">
        <title>Molecular diversity in venom proteins of the Russell's viper (Daboia russellii russellii) and the Indian cobra (Naja naja) in Sri Lanka.</title>
        <authorList>
            <person name="Suzuki M."/>
            <person name="Itoh T."/>
            <person name="Bandaranayake B.M.A.I.K."/>
            <person name="Ranasinghe J.G."/>
            <person name="Athauda S.B."/>
            <person name="Moriyama A."/>
        </authorList>
    </citation>
    <scope>PROTEIN SEQUENCE</scope>
    <scope>SUBCELLULAR LOCATION</scope>
    <scope>TISSUE SPECIFICITY</scope>
    <source>
        <tissue evidence="5">Venom</tissue>
    </source>
</reference>
<proteinExistence type="evidence at protein level"/>
<keyword id="KW-1204">Blood coagulation cascade activating toxin</keyword>
<keyword id="KW-0903">Direct protein sequencing</keyword>
<keyword id="KW-1015">Disulfide bond</keyword>
<keyword id="KW-0325">Glycoprotein</keyword>
<keyword id="KW-1199">Hemostasis impairing toxin</keyword>
<keyword id="KW-0378">Hydrolase</keyword>
<keyword id="KW-0479">Metal-binding</keyword>
<keyword id="KW-0482">Metalloprotease</keyword>
<keyword id="KW-0645">Protease</keyword>
<keyword id="KW-0964">Secreted</keyword>
<keyword id="KW-0800">Toxin</keyword>
<keyword id="KW-0862">Zinc</keyword>
<evidence type="ECO:0000250" key="1"/>
<evidence type="ECO:0000250" key="2">
    <source>
        <dbReference type="UniProtKB" id="Q4VM07"/>
    </source>
</evidence>
<evidence type="ECO:0000250" key="3">
    <source>
        <dbReference type="UniProtKB" id="Q7LZ61"/>
    </source>
</evidence>
<evidence type="ECO:0000255" key="4">
    <source>
        <dbReference type="PROSITE-ProRule" id="PRU00276"/>
    </source>
</evidence>
<evidence type="ECO:0000269" key="5">
    <source>
    </source>
</evidence>
<evidence type="ECO:0000303" key="6">
    <source>
    </source>
</evidence>
<evidence type="ECO:0000305" key="7"/>